<dbReference type="EC" id="2.7.11.1"/>
<dbReference type="EMBL" id="AC004255">
    <property type="protein sequence ID" value="AAC13904.1"/>
    <property type="status" value="ALT_SEQ"/>
    <property type="molecule type" value="Genomic_DNA"/>
</dbReference>
<dbReference type="EMBL" id="CP002684">
    <property type="protein sequence ID" value="AEE33828.1"/>
    <property type="molecule type" value="Genomic_DNA"/>
</dbReference>
<dbReference type="PIR" id="C96639">
    <property type="entry name" value="C96639"/>
</dbReference>
<dbReference type="RefSeq" id="NP_176332.1">
    <property type="nucleotide sequence ID" value="NM_104818.2"/>
</dbReference>
<dbReference type="SMR" id="O64783"/>
<dbReference type="BioGRID" id="27654">
    <property type="interactions" value="12"/>
</dbReference>
<dbReference type="IntAct" id="O64783">
    <property type="interactions" value="12"/>
</dbReference>
<dbReference type="STRING" id="3702.O64783"/>
<dbReference type="GlyGen" id="O64783">
    <property type="glycosylation" value="10 sites"/>
</dbReference>
<dbReference type="PaxDb" id="3702-AT1G61370.1"/>
<dbReference type="ProteomicsDB" id="243048"/>
<dbReference type="EnsemblPlants" id="AT1G61370.1">
    <property type="protein sequence ID" value="AT1G61370.1"/>
    <property type="gene ID" value="AT1G61370"/>
</dbReference>
<dbReference type="GeneID" id="842431"/>
<dbReference type="Gramene" id="AT1G61370.1">
    <property type="protein sequence ID" value="AT1G61370.1"/>
    <property type="gene ID" value="AT1G61370"/>
</dbReference>
<dbReference type="KEGG" id="ath:AT1G61370"/>
<dbReference type="Araport" id="AT1G61370"/>
<dbReference type="TAIR" id="AT1G61370"/>
<dbReference type="eggNOG" id="ENOG502QSUU">
    <property type="taxonomic scope" value="Eukaryota"/>
</dbReference>
<dbReference type="HOGENOM" id="CLU_000288_116_1_1"/>
<dbReference type="InParanoid" id="O64783"/>
<dbReference type="OMA" id="FFEIQTI"/>
<dbReference type="PhylomeDB" id="O64783"/>
<dbReference type="PRO" id="PR:O64783"/>
<dbReference type="Proteomes" id="UP000006548">
    <property type="component" value="Chromosome 1"/>
</dbReference>
<dbReference type="ExpressionAtlas" id="O64783">
    <property type="expression patterns" value="baseline and differential"/>
</dbReference>
<dbReference type="GO" id="GO:0005886">
    <property type="term" value="C:plasma membrane"/>
    <property type="evidence" value="ECO:0007669"/>
    <property type="project" value="UniProtKB-SubCell"/>
</dbReference>
<dbReference type="GO" id="GO:0005524">
    <property type="term" value="F:ATP binding"/>
    <property type="evidence" value="ECO:0007669"/>
    <property type="project" value="UniProtKB-KW"/>
</dbReference>
<dbReference type="GO" id="GO:0005516">
    <property type="term" value="F:calmodulin binding"/>
    <property type="evidence" value="ECO:0000250"/>
    <property type="project" value="UniProtKB"/>
</dbReference>
<dbReference type="GO" id="GO:0030246">
    <property type="term" value="F:carbohydrate binding"/>
    <property type="evidence" value="ECO:0007669"/>
    <property type="project" value="UniProtKB-KW"/>
</dbReference>
<dbReference type="GO" id="GO:0106310">
    <property type="term" value="F:protein serine kinase activity"/>
    <property type="evidence" value="ECO:0007669"/>
    <property type="project" value="RHEA"/>
</dbReference>
<dbReference type="GO" id="GO:0004674">
    <property type="term" value="F:protein serine/threonine kinase activity"/>
    <property type="evidence" value="ECO:0000250"/>
    <property type="project" value="UniProtKB"/>
</dbReference>
<dbReference type="GO" id="GO:0031625">
    <property type="term" value="F:ubiquitin protein ligase binding"/>
    <property type="evidence" value="ECO:0007669"/>
    <property type="project" value="UniProtKB-ARBA"/>
</dbReference>
<dbReference type="GO" id="GO:0048544">
    <property type="term" value="P:recognition of pollen"/>
    <property type="evidence" value="ECO:0007669"/>
    <property type="project" value="InterPro"/>
</dbReference>
<dbReference type="CDD" id="cd00028">
    <property type="entry name" value="B_lectin"/>
    <property type="match status" value="1"/>
</dbReference>
<dbReference type="CDD" id="cd01098">
    <property type="entry name" value="PAN_AP_plant"/>
    <property type="match status" value="1"/>
</dbReference>
<dbReference type="CDD" id="cd14066">
    <property type="entry name" value="STKc_IRAK"/>
    <property type="match status" value="1"/>
</dbReference>
<dbReference type="FunFam" id="1.10.510.10:FF:000345">
    <property type="entry name" value="G-type lectin S-receptor-like serine/threonine-protein kinase"/>
    <property type="match status" value="1"/>
</dbReference>
<dbReference type="FunFam" id="2.90.10.10:FF:000003">
    <property type="entry name" value="G-type lectin S-receptor-like serine/threonine-protein kinase"/>
    <property type="match status" value="1"/>
</dbReference>
<dbReference type="FunFam" id="3.30.200.20:FF:000330">
    <property type="entry name" value="G-type lectin S-receptor-like serine/threonine-protein kinase At4g03230"/>
    <property type="match status" value="1"/>
</dbReference>
<dbReference type="Gene3D" id="2.90.10.10">
    <property type="entry name" value="Bulb-type lectin domain"/>
    <property type="match status" value="1"/>
</dbReference>
<dbReference type="Gene3D" id="3.30.200.20">
    <property type="entry name" value="Phosphorylase Kinase, domain 1"/>
    <property type="match status" value="1"/>
</dbReference>
<dbReference type="Gene3D" id="1.10.510.10">
    <property type="entry name" value="Transferase(Phosphotransferase) domain 1"/>
    <property type="match status" value="1"/>
</dbReference>
<dbReference type="InterPro" id="IPR001480">
    <property type="entry name" value="Bulb-type_lectin_dom"/>
</dbReference>
<dbReference type="InterPro" id="IPR036426">
    <property type="entry name" value="Bulb-type_lectin_dom_sf"/>
</dbReference>
<dbReference type="InterPro" id="IPR011009">
    <property type="entry name" value="Kinase-like_dom_sf"/>
</dbReference>
<dbReference type="InterPro" id="IPR003609">
    <property type="entry name" value="Pan_app"/>
</dbReference>
<dbReference type="InterPro" id="IPR000719">
    <property type="entry name" value="Prot_kinase_dom"/>
</dbReference>
<dbReference type="InterPro" id="IPR021820">
    <property type="entry name" value="S-locus_recpt_kinase_C"/>
</dbReference>
<dbReference type="InterPro" id="IPR000858">
    <property type="entry name" value="S_locus_glycoprot_dom"/>
</dbReference>
<dbReference type="InterPro" id="IPR001245">
    <property type="entry name" value="Ser-Thr/Tyr_kinase_cat_dom"/>
</dbReference>
<dbReference type="InterPro" id="IPR008271">
    <property type="entry name" value="Ser/Thr_kinase_AS"/>
</dbReference>
<dbReference type="InterPro" id="IPR024171">
    <property type="entry name" value="SRK-like_kinase"/>
</dbReference>
<dbReference type="PANTHER" id="PTHR27002:SF1088">
    <property type="entry name" value="NON-SPECIFIC SERINE_THREONINE PROTEIN KINASE"/>
    <property type="match status" value="1"/>
</dbReference>
<dbReference type="PANTHER" id="PTHR27002">
    <property type="entry name" value="RECEPTOR-LIKE SERINE/THREONINE-PROTEIN KINASE SD1-8"/>
    <property type="match status" value="1"/>
</dbReference>
<dbReference type="Pfam" id="PF01453">
    <property type="entry name" value="B_lectin"/>
    <property type="match status" value="1"/>
</dbReference>
<dbReference type="Pfam" id="PF11883">
    <property type="entry name" value="DUF3403"/>
    <property type="match status" value="1"/>
</dbReference>
<dbReference type="Pfam" id="PF08276">
    <property type="entry name" value="PAN_2"/>
    <property type="match status" value="1"/>
</dbReference>
<dbReference type="Pfam" id="PF07714">
    <property type="entry name" value="PK_Tyr_Ser-Thr"/>
    <property type="match status" value="1"/>
</dbReference>
<dbReference type="Pfam" id="PF00954">
    <property type="entry name" value="S_locus_glycop"/>
    <property type="match status" value="1"/>
</dbReference>
<dbReference type="PIRSF" id="PIRSF000641">
    <property type="entry name" value="SRK"/>
    <property type="match status" value="1"/>
</dbReference>
<dbReference type="SMART" id="SM00108">
    <property type="entry name" value="B_lectin"/>
    <property type="match status" value="1"/>
</dbReference>
<dbReference type="SMART" id="SM00473">
    <property type="entry name" value="PAN_AP"/>
    <property type="match status" value="1"/>
</dbReference>
<dbReference type="SMART" id="SM00220">
    <property type="entry name" value="S_TKc"/>
    <property type="match status" value="1"/>
</dbReference>
<dbReference type="SUPFAM" id="SSF51110">
    <property type="entry name" value="alpha-D-mannose-specific plant lectins"/>
    <property type="match status" value="1"/>
</dbReference>
<dbReference type="SUPFAM" id="SSF56112">
    <property type="entry name" value="Protein kinase-like (PK-like)"/>
    <property type="match status" value="1"/>
</dbReference>
<dbReference type="PROSITE" id="PS50927">
    <property type="entry name" value="BULB_LECTIN"/>
    <property type="match status" value="1"/>
</dbReference>
<dbReference type="PROSITE" id="PS50948">
    <property type="entry name" value="PAN"/>
    <property type="match status" value="1"/>
</dbReference>
<dbReference type="PROSITE" id="PS50011">
    <property type="entry name" value="PROTEIN_KINASE_DOM"/>
    <property type="match status" value="1"/>
</dbReference>
<dbReference type="PROSITE" id="PS00108">
    <property type="entry name" value="PROTEIN_KINASE_ST"/>
    <property type="match status" value="1"/>
</dbReference>
<accession>O64783</accession>
<sequence>MGKIGIVFFASLLFLLIIFPSCAFAAITRASPLSIGQTLSSPNGTYELGFFSPNNSRNQYVGIWFKNITPRVVVWVANRDKPVTNNAANLTINSNGSLILVEREQNVVWSIGETFSSNELRAELLENGNLVLIDGVSERNLWESFEHLGDTMLLESSVMYDVPNNKKRVLSSWKNPTDPSPGEFVAELTTQVPPQGFIMRGSRPYWRGGPWARVRFTGIPEMDGSHVSKFDISQDVAAGTGSLTYSLERRNSNLSYTTLTSAGSLKIIWNNGSGWVTDLEAPVSSCDVYNTCGPFGLCIRSNPPKCECLKGFVPKSDEEWNKRNWTGGCMRRTNLSCDVNSSATAQANNGDIFDIVANVKPPDFYEYLSLINEEDCQQRCLGNCSCTAFSYIEQIGCLVWNRELVDVMQFVAGGETLSIRLASSELAGSNRVKIIVASIVSISVFMILVFASYWYWRYKAKQNDSNPIPLETSQDAWREQLKPQDVNFFDMQTILTITNNFSMENKLGQGGFGPVYKGNLQDGKEIAIKRLSSTSGQGLEEFMNEIILISKLQHRNLVRLLGCCIEGEEKLLIYEFMANKSLNTFIFDSTKKLELDWPKRFEIIQGIACGLLYLHRDSCLRVVHRDMKVSNILLDEEMNPKISDFGLARMFQGTQHQANTRRVVGTLGYMSPEYAWTGMFSEKSDIYAFGVLLLEIITGKRISSFTIGEEGKTLLEFAWDSWCESGGSDLLDQDISSSGSESEVARCVQIGLLCIQQQAGDRPNIAQVMSMLTTTMDLPKPKQPVFAMQVQESDSESKTMYSVNNITQTAIVGR</sequence>
<feature type="signal peptide" evidence="3">
    <location>
        <begin position="1"/>
        <end position="25"/>
    </location>
</feature>
<feature type="chain" id="PRO_0000401316" description="G-type lectin S-receptor-like serine/threonine-protein kinase At1g61370">
    <location>
        <begin position="26"/>
        <end position="814"/>
    </location>
</feature>
<feature type="topological domain" description="Extracellular" evidence="3">
    <location>
        <begin position="26"/>
        <end position="433"/>
    </location>
</feature>
<feature type="transmembrane region" description="Helical" evidence="3">
    <location>
        <begin position="434"/>
        <end position="454"/>
    </location>
</feature>
<feature type="topological domain" description="Cytoplasmic" evidence="3">
    <location>
        <begin position="455"/>
        <end position="814"/>
    </location>
</feature>
<feature type="domain" description="Bulb-type lectin" evidence="4">
    <location>
        <begin position="26"/>
        <end position="145"/>
    </location>
</feature>
<feature type="domain" description="EGF-like">
    <location>
        <begin position="282"/>
        <end position="318"/>
    </location>
</feature>
<feature type="domain" description="PAN" evidence="6">
    <location>
        <begin position="337"/>
        <end position="423"/>
    </location>
</feature>
<feature type="domain" description="Protein kinase" evidence="5">
    <location>
        <begin position="501"/>
        <end position="786"/>
    </location>
</feature>
<feature type="region of interest" description="CaM-binding" evidence="1">
    <location>
        <begin position="590"/>
        <end position="607"/>
    </location>
</feature>
<feature type="active site" description="Proton acceptor" evidence="5 7">
    <location>
        <position position="626"/>
    </location>
</feature>
<feature type="binding site" evidence="5">
    <location>
        <begin position="507"/>
        <end position="515"/>
    </location>
    <ligand>
        <name>ATP</name>
        <dbReference type="ChEBI" id="CHEBI:30616"/>
    </ligand>
</feature>
<feature type="binding site" evidence="5">
    <location>
        <position position="529"/>
    </location>
    <ligand>
        <name>ATP</name>
        <dbReference type="ChEBI" id="CHEBI:30616"/>
    </ligand>
</feature>
<feature type="modified residue" description="Phosphoserine" evidence="2">
    <location>
        <position position="535"/>
    </location>
</feature>
<feature type="modified residue" description="Phosphoserine" evidence="2">
    <location>
        <position position="550"/>
    </location>
</feature>
<feature type="modified residue" description="Phosphoserine" evidence="2">
    <location>
        <position position="630"/>
    </location>
</feature>
<feature type="modified residue" description="Phosphoserine" evidence="2">
    <location>
        <position position="643"/>
    </location>
</feature>
<feature type="modified residue" description="Phosphothreonine" evidence="2">
    <location>
        <position position="660"/>
    </location>
</feature>
<feature type="modified residue" description="Phosphoserine" evidence="2">
    <location>
        <position position="703"/>
    </location>
</feature>
<feature type="modified residue" description="Phosphoserine" evidence="2">
    <location>
        <position position="704"/>
    </location>
</feature>
<feature type="modified residue" description="Phosphoserine" evidence="2">
    <location>
        <position position="797"/>
    </location>
</feature>
<feature type="modified residue" description="Phosphoserine" evidence="2">
    <location>
        <position position="802"/>
    </location>
</feature>
<feature type="modified residue" description="Phosphothreonine" evidence="2">
    <location>
        <position position="809"/>
    </location>
</feature>
<feature type="glycosylation site" description="N-linked (GlcNAc...) asparagine" evidence="3">
    <location>
        <position position="43"/>
    </location>
</feature>
<feature type="glycosylation site" description="N-linked (GlcNAc...) asparagine" evidence="3">
    <location>
        <position position="54"/>
    </location>
</feature>
<feature type="glycosylation site" description="N-linked (GlcNAc...) asparagine" evidence="3">
    <location>
        <position position="89"/>
    </location>
</feature>
<feature type="glycosylation site" description="N-linked (GlcNAc...) asparagine" evidence="3">
    <location>
        <position position="95"/>
    </location>
</feature>
<feature type="glycosylation site" description="N-linked (GlcNAc...) asparagine" evidence="3">
    <location>
        <position position="253"/>
    </location>
</feature>
<feature type="glycosylation site" description="N-linked (GlcNAc...) asparagine" evidence="3">
    <location>
        <position position="271"/>
    </location>
</feature>
<feature type="glycosylation site" description="N-linked (GlcNAc...) asparagine" evidence="3">
    <location>
        <position position="324"/>
    </location>
</feature>
<feature type="glycosylation site" description="N-linked (GlcNAc...) asparagine" evidence="3">
    <location>
        <position position="334"/>
    </location>
</feature>
<feature type="glycosylation site" description="N-linked (GlcNAc...) asparagine" evidence="3">
    <location>
        <position position="340"/>
    </location>
</feature>
<feature type="glycosylation site" description="N-linked (GlcNAc...) asparagine" evidence="3">
    <location>
        <position position="383"/>
    </location>
</feature>
<feature type="disulfide bond" evidence="1">
    <location>
        <begin position="286"/>
        <end position="298"/>
    </location>
</feature>
<feature type="disulfide bond" evidence="1">
    <location>
        <begin position="292"/>
        <end position="306"/>
    </location>
</feature>
<feature type="disulfide bond" evidence="1">
    <location>
        <begin position="376"/>
        <end position="397"/>
    </location>
</feature>
<feature type="disulfide bond" evidence="1">
    <location>
        <begin position="380"/>
        <end position="386"/>
    </location>
</feature>
<reference key="1">
    <citation type="journal article" date="2000" name="Nature">
        <title>Sequence and analysis of chromosome 1 of the plant Arabidopsis thaliana.</title>
        <authorList>
            <person name="Theologis A."/>
            <person name="Ecker J.R."/>
            <person name="Palm C.J."/>
            <person name="Federspiel N.A."/>
            <person name="Kaul S."/>
            <person name="White O."/>
            <person name="Alonso J."/>
            <person name="Altafi H."/>
            <person name="Araujo R."/>
            <person name="Bowman C.L."/>
            <person name="Brooks S.Y."/>
            <person name="Buehler E."/>
            <person name="Chan A."/>
            <person name="Chao Q."/>
            <person name="Chen H."/>
            <person name="Cheuk R.F."/>
            <person name="Chin C.W."/>
            <person name="Chung M.K."/>
            <person name="Conn L."/>
            <person name="Conway A.B."/>
            <person name="Conway A.R."/>
            <person name="Creasy T.H."/>
            <person name="Dewar K."/>
            <person name="Dunn P."/>
            <person name="Etgu P."/>
            <person name="Feldblyum T.V."/>
            <person name="Feng J.-D."/>
            <person name="Fong B."/>
            <person name="Fujii C.Y."/>
            <person name="Gill J.E."/>
            <person name="Goldsmith A.D."/>
            <person name="Haas B."/>
            <person name="Hansen N.F."/>
            <person name="Hughes B."/>
            <person name="Huizar L."/>
            <person name="Hunter J.L."/>
            <person name="Jenkins J."/>
            <person name="Johnson-Hopson C."/>
            <person name="Khan S."/>
            <person name="Khaykin E."/>
            <person name="Kim C.J."/>
            <person name="Koo H.L."/>
            <person name="Kremenetskaia I."/>
            <person name="Kurtz D.B."/>
            <person name="Kwan A."/>
            <person name="Lam B."/>
            <person name="Langin-Hooper S."/>
            <person name="Lee A."/>
            <person name="Lee J.M."/>
            <person name="Lenz C.A."/>
            <person name="Li J.H."/>
            <person name="Li Y.-P."/>
            <person name="Lin X."/>
            <person name="Liu S.X."/>
            <person name="Liu Z.A."/>
            <person name="Luros J.S."/>
            <person name="Maiti R."/>
            <person name="Marziali A."/>
            <person name="Militscher J."/>
            <person name="Miranda M."/>
            <person name="Nguyen M."/>
            <person name="Nierman W.C."/>
            <person name="Osborne B.I."/>
            <person name="Pai G."/>
            <person name="Peterson J."/>
            <person name="Pham P.K."/>
            <person name="Rizzo M."/>
            <person name="Rooney T."/>
            <person name="Rowley D."/>
            <person name="Sakano H."/>
            <person name="Salzberg S.L."/>
            <person name="Schwartz J.R."/>
            <person name="Shinn P."/>
            <person name="Southwick A.M."/>
            <person name="Sun H."/>
            <person name="Tallon L.J."/>
            <person name="Tambunga G."/>
            <person name="Toriumi M.J."/>
            <person name="Town C.D."/>
            <person name="Utterback T."/>
            <person name="Van Aken S."/>
            <person name="Vaysberg M."/>
            <person name="Vysotskaia V.S."/>
            <person name="Walker M."/>
            <person name="Wu D."/>
            <person name="Yu G."/>
            <person name="Fraser C.M."/>
            <person name="Venter J.C."/>
            <person name="Davis R.W."/>
        </authorList>
    </citation>
    <scope>NUCLEOTIDE SEQUENCE [LARGE SCALE GENOMIC DNA]</scope>
    <source>
        <strain>cv. Columbia</strain>
    </source>
</reference>
<reference key="2">
    <citation type="journal article" date="2017" name="Plant J.">
        <title>Araport11: a complete reannotation of the Arabidopsis thaliana reference genome.</title>
        <authorList>
            <person name="Cheng C.Y."/>
            <person name="Krishnakumar V."/>
            <person name="Chan A.P."/>
            <person name="Thibaud-Nissen F."/>
            <person name="Schobel S."/>
            <person name="Town C.D."/>
        </authorList>
    </citation>
    <scope>GENOME REANNOTATION</scope>
    <source>
        <strain>cv. Columbia</strain>
    </source>
</reference>
<protein>
    <recommendedName>
        <fullName>G-type lectin S-receptor-like serine/threonine-protein kinase At1g61370</fullName>
        <ecNumber>2.7.11.1</ecNumber>
    </recommendedName>
</protein>
<keyword id="KW-0067">ATP-binding</keyword>
<keyword id="KW-1003">Cell membrane</keyword>
<keyword id="KW-1015">Disulfide bond</keyword>
<keyword id="KW-0245">EGF-like domain</keyword>
<keyword id="KW-0325">Glycoprotein</keyword>
<keyword id="KW-0418">Kinase</keyword>
<keyword id="KW-0430">Lectin</keyword>
<keyword id="KW-0472">Membrane</keyword>
<keyword id="KW-0547">Nucleotide-binding</keyword>
<keyword id="KW-0597">Phosphoprotein</keyword>
<keyword id="KW-0675">Receptor</keyword>
<keyword id="KW-1185">Reference proteome</keyword>
<keyword id="KW-0723">Serine/threonine-protein kinase</keyword>
<keyword id="KW-0732">Signal</keyword>
<keyword id="KW-0808">Transferase</keyword>
<keyword id="KW-0812">Transmembrane</keyword>
<keyword id="KW-1133">Transmembrane helix</keyword>
<organism>
    <name type="scientific">Arabidopsis thaliana</name>
    <name type="common">Mouse-ear cress</name>
    <dbReference type="NCBI Taxonomy" id="3702"/>
    <lineage>
        <taxon>Eukaryota</taxon>
        <taxon>Viridiplantae</taxon>
        <taxon>Streptophyta</taxon>
        <taxon>Embryophyta</taxon>
        <taxon>Tracheophyta</taxon>
        <taxon>Spermatophyta</taxon>
        <taxon>Magnoliopsida</taxon>
        <taxon>eudicotyledons</taxon>
        <taxon>Gunneridae</taxon>
        <taxon>Pentapetalae</taxon>
        <taxon>rosids</taxon>
        <taxon>malvids</taxon>
        <taxon>Brassicales</taxon>
        <taxon>Brassicaceae</taxon>
        <taxon>Camelineae</taxon>
        <taxon>Arabidopsis</taxon>
    </lineage>
</organism>
<proteinExistence type="inferred from homology"/>
<gene>
    <name type="ordered locus">At1g61370</name>
    <name type="ORF">T1F9.14</name>
</gene>
<evidence type="ECO:0000250" key="1"/>
<evidence type="ECO:0000250" key="2">
    <source>
        <dbReference type="UniProtKB" id="Q9LPZ9"/>
    </source>
</evidence>
<evidence type="ECO:0000255" key="3"/>
<evidence type="ECO:0000255" key="4">
    <source>
        <dbReference type="PROSITE-ProRule" id="PRU00038"/>
    </source>
</evidence>
<evidence type="ECO:0000255" key="5">
    <source>
        <dbReference type="PROSITE-ProRule" id="PRU00159"/>
    </source>
</evidence>
<evidence type="ECO:0000255" key="6">
    <source>
        <dbReference type="PROSITE-ProRule" id="PRU00315"/>
    </source>
</evidence>
<evidence type="ECO:0000255" key="7">
    <source>
        <dbReference type="PROSITE-ProRule" id="PRU10027"/>
    </source>
</evidence>
<evidence type="ECO:0000305" key="8"/>
<comment type="catalytic activity">
    <reaction>
        <text>L-seryl-[protein] + ATP = O-phospho-L-seryl-[protein] + ADP + H(+)</text>
        <dbReference type="Rhea" id="RHEA:17989"/>
        <dbReference type="Rhea" id="RHEA-COMP:9863"/>
        <dbReference type="Rhea" id="RHEA-COMP:11604"/>
        <dbReference type="ChEBI" id="CHEBI:15378"/>
        <dbReference type="ChEBI" id="CHEBI:29999"/>
        <dbReference type="ChEBI" id="CHEBI:30616"/>
        <dbReference type="ChEBI" id="CHEBI:83421"/>
        <dbReference type="ChEBI" id="CHEBI:456216"/>
        <dbReference type="EC" id="2.7.11.1"/>
    </reaction>
</comment>
<comment type="catalytic activity">
    <reaction>
        <text>L-threonyl-[protein] + ATP = O-phospho-L-threonyl-[protein] + ADP + H(+)</text>
        <dbReference type="Rhea" id="RHEA:46608"/>
        <dbReference type="Rhea" id="RHEA-COMP:11060"/>
        <dbReference type="Rhea" id="RHEA-COMP:11605"/>
        <dbReference type="ChEBI" id="CHEBI:15378"/>
        <dbReference type="ChEBI" id="CHEBI:30013"/>
        <dbReference type="ChEBI" id="CHEBI:30616"/>
        <dbReference type="ChEBI" id="CHEBI:61977"/>
        <dbReference type="ChEBI" id="CHEBI:456216"/>
        <dbReference type="EC" id="2.7.11.1"/>
    </reaction>
</comment>
<comment type="subcellular location">
    <subcellularLocation>
        <location evidence="1">Cell membrane</location>
        <topology evidence="1">Single-pass type I membrane protein</topology>
    </subcellularLocation>
</comment>
<comment type="similarity">
    <text evidence="5">Belongs to the protein kinase superfamily. Ser/Thr protein kinase family.</text>
</comment>
<comment type="sequence caution" evidence="8">
    <conflict type="erroneous gene model prediction">
        <sequence resource="EMBL-CDS" id="AAC13904"/>
    </conflict>
</comment>
<name>Y1137_ARATH</name>